<dbReference type="EMBL" id="X74737">
    <property type="protein sequence ID" value="CAA52756.1"/>
    <property type="molecule type" value="Genomic_DNA"/>
</dbReference>
<dbReference type="EMBL" id="D64126">
    <property type="protein sequence ID" value="BAA10994.1"/>
    <property type="molecule type" value="Genomic_DNA"/>
</dbReference>
<dbReference type="EMBL" id="AL009126">
    <property type="protein sequence ID" value="CAB11930.1"/>
    <property type="molecule type" value="Genomic_DNA"/>
</dbReference>
<dbReference type="EMBL" id="M27259">
    <property type="status" value="NOT_ANNOTATED_CDS"/>
    <property type="molecule type" value="Genomic_DNA"/>
</dbReference>
<dbReference type="PIR" id="A69743">
    <property type="entry name" value="A69743"/>
</dbReference>
<dbReference type="RefSeq" id="NP_388035.1">
    <property type="nucleotide sequence ID" value="NC_000964.3"/>
</dbReference>
<dbReference type="RefSeq" id="WP_003235124.1">
    <property type="nucleotide sequence ID" value="NZ_OZ025638.1"/>
</dbReference>
<dbReference type="SMR" id="P50863"/>
<dbReference type="FunCoup" id="P50863">
    <property type="interactions" value="577"/>
</dbReference>
<dbReference type="IntAct" id="P50863">
    <property type="interactions" value="5"/>
</dbReference>
<dbReference type="MINT" id="P50863"/>
<dbReference type="STRING" id="224308.BSU01540"/>
<dbReference type="jPOST" id="P50863"/>
<dbReference type="PaxDb" id="224308-BSU01540"/>
<dbReference type="EnsemblBacteria" id="CAB11930">
    <property type="protein sequence ID" value="CAB11930"/>
    <property type="gene ID" value="BSU_01540"/>
</dbReference>
<dbReference type="GeneID" id="938914"/>
<dbReference type="KEGG" id="bsu:BSU01540"/>
<dbReference type="PATRIC" id="fig|224308.179.peg.158"/>
<dbReference type="eggNOG" id="COG0489">
    <property type="taxonomic scope" value="Bacteria"/>
</dbReference>
<dbReference type="InParanoid" id="P50863"/>
<dbReference type="OrthoDB" id="9809679at2"/>
<dbReference type="PhylomeDB" id="P50863"/>
<dbReference type="BioCyc" id="BSUB:BSU01540-MONOMER"/>
<dbReference type="Proteomes" id="UP000001570">
    <property type="component" value="Chromosome"/>
</dbReference>
<dbReference type="GO" id="GO:0051539">
    <property type="term" value="F:4 iron, 4 sulfur cluster binding"/>
    <property type="evidence" value="ECO:0000318"/>
    <property type="project" value="GO_Central"/>
</dbReference>
<dbReference type="GO" id="GO:0005524">
    <property type="term" value="F:ATP binding"/>
    <property type="evidence" value="ECO:0007669"/>
    <property type="project" value="UniProtKB-UniRule"/>
</dbReference>
<dbReference type="GO" id="GO:0016887">
    <property type="term" value="F:ATP hydrolysis activity"/>
    <property type="evidence" value="ECO:0007669"/>
    <property type="project" value="UniProtKB-UniRule"/>
</dbReference>
<dbReference type="GO" id="GO:0140663">
    <property type="term" value="F:ATP-dependent FeS chaperone activity"/>
    <property type="evidence" value="ECO:0007669"/>
    <property type="project" value="InterPro"/>
</dbReference>
<dbReference type="GO" id="GO:0046872">
    <property type="term" value="F:metal ion binding"/>
    <property type="evidence" value="ECO:0007669"/>
    <property type="project" value="UniProtKB-KW"/>
</dbReference>
<dbReference type="GO" id="GO:0016226">
    <property type="term" value="P:iron-sulfur cluster assembly"/>
    <property type="evidence" value="ECO:0000318"/>
    <property type="project" value="GO_Central"/>
</dbReference>
<dbReference type="GO" id="GO:0045892">
    <property type="term" value="P:negative regulation of DNA-templated transcription"/>
    <property type="evidence" value="ECO:0000315"/>
    <property type="project" value="CACAO"/>
</dbReference>
<dbReference type="CDD" id="cd02037">
    <property type="entry name" value="Mrp_NBP35"/>
    <property type="match status" value="1"/>
</dbReference>
<dbReference type="FunFam" id="3.40.50.300:FF:001099">
    <property type="entry name" value="Iron-sulfur cluster carrier protein"/>
    <property type="match status" value="1"/>
</dbReference>
<dbReference type="Gene3D" id="3.40.50.300">
    <property type="entry name" value="P-loop containing nucleotide triphosphate hydrolases"/>
    <property type="match status" value="1"/>
</dbReference>
<dbReference type="HAMAP" id="MF_02040">
    <property type="entry name" value="Mrp_NBP35"/>
    <property type="match status" value="1"/>
</dbReference>
<dbReference type="InterPro" id="IPR000808">
    <property type="entry name" value="Mrp-like_CS"/>
</dbReference>
<dbReference type="InterPro" id="IPR019591">
    <property type="entry name" value="Mrp/NBP35_ATP-bd"/>
</dbReference>
<dbReference type="InterPro" id="IPR044304">
    <property type="entry name" value="NUBPL-like"/>
</dbReference>
<dbReference type="InterPro" id="IPR027417">
    <property type="entry name" value="P-loop_NTPase"/>
</dbReference>
<dbReference type="InterPro" id="IPR033756">
    <property type="entry name" value="YlxH/NBP35"/>
</dbReference>
<dbReference type="PANTHER" id="PTHR42961">
    <property type="entry name" value="IRON-SULFUR PROTEIN NUBPL"/>
    <property type="match status" value="1"/>
</dbReference>
<dbReference type="PANTHER" id="PTHR42961:SF2">
    <property type="entry name" value="IRON-SULFUR PROTEIN NUBPL"/>
    <property type="match status" value="1"/>
</dbReference>
<dbReference type="Pfam" id="PF10609">
    <property type="entry name" value="ParA"/>
    <property type="match status" value="1"/>
</dbReference>
<dbReference type="SUPFAM" id="SSF52540">
    <property type="entry name" value="P-loop containing nucleoside triphosphate hydrolases"/>
    <property type="match status" value="1"/>
</dbReference>
<dbReference type="PROSITE" id="PS01215">
    <property type="entry name" value="MRP"/>
    <property type="match status" value="1"/>
</dbReference>
<comment type="function">
    <text evidence="1">Binds and transfers iron-sulfur (Fe-S) clusters to target apoproteins. Can hydrolyze ATP.</text>
</comment>
<comment type="function">
    <text evidence="2">Negatively regulates the expression of hpr/scoC. The effect on hpr/scoC may be indirect.</text>
</comment>
<comment type="subunit">
    <text evidence="1 3">Homodimer (By similarity). Interacts with BrxC (PubMed:33722570).</text>
</comment>
<comment type="induction">
    <text>Autoregulated.</text>
</comment>
<comment type="similarity">
    <text evidence="1">Belongs to the Mrp/NBP35 ATP-binding proteins family.</text>
</comment>
<reference key="1">
    <citation type="journal article" date="1995" name="J. Bacteriol.">
        <title>Nucleotide sequence and regulation of a new putative cell wall hydrolase gene, cwlD, which affects germination in Bacillus subtilis.</title>
        <authorList>
            <person name="Sekiguchi J."/>
            <person name="Akeo K."/>
            <person name="Yamamoto H."/>
            <person name="Khasanov F.K."/>
            <person name="Alonso J.C."/>
            <person name="Kuroda A."/>
        </authorList>
    </citation>
    <scope>NUCLEOTIDE SEQUENCE [GENOMIC DNA]</scope>
</reference>
<reference key="2">
    <citation type="journal article" date="1996" name="Microbiology">
        <title>Sequence analysis of a 50 kb region between spo0H and rrnH on the Bacillus subtilis chromosome.</title>
        <authorList>
            <person name="Yasumoto K."/>
            <person name="Liu H."/>
            <person name="Jeong S.M."/>
            <person name="Ohashi Y."/>
            <person name="Kakinuma S."/>
            <person name="Tanaka K."/>
            <person name="Kawamura F."/>
            <person name="Yoshikawa H."/>
            <person name="Takahashi H."/>
        </authorList>
    </citation>
    <scope>NUCLEOTIDE SEQUENCE [GENOMIC DNA]</scope>
    <source>
        <strain>168</strain>
    </source>
</reference>
<reference key="3">
    <citation type="journal article" date="1997" name="Nature">
        <title>The complete genome sequence of the Gram-positive bacterium Bacillus subtilis.</title>
        <authorList>
            <person name="Kunst F."/>
            <person name="Ogasawara N."/>
            <person name="Moszer I."/>
            <person name="Albertini A.M."/>
            <person name="Alloni G."/>
            <person name="Azevedo V."/>
            <person name="Bertero M.G."/>
            <person name="Bessieres P."/>
            <person name="Bolotin A."/>
            <person name="Borchert S."/>
            <person name="Borriss R."/>
            <person name="Boursier L."/>
            <person name="Brans A."/>
            <person name="Braun M."/>
            <person name="Brignell S.C."/>
            <person name="Bron S."/>
            <person name="Brouillet S."/>
            <person name="Bruschi C.V."/>
            <person name="Caldwell B."/>
            <person name="Capuano V."/>
            <person name="Carter N.M."/>
            <person name="Choi S.-K."/>
            <person name="Codani J.-J."/>
            <person name="Connerton I.F."/>
            <person name="Cummings N.J."/>
            <person name="Daniel R.A."/>
            <person name="Denizot F."/>
            <person name="Devine K.M."/>
            <person name="Duesterhoeft A."/>
            <person name="Ehrlich S.D."/>
            <person name="Emmerson P.T."/>
            <person name="Entian K.-D."/>
            <person name="Errington J."/>
            <person name="Fabret C."/>
            <person name="Ferrari E."/>
            <person name="Foulger D."/>
            <person name="Fritz C."/>
            <person name="Fujita M."/>
            <person name="Fujita Y."/>
            <person name="Fuma S."/>
            <person name="Galizzi A."/>
            <person name="Galleron N."/>
            <person name="Ghim S.-Y."/>
            <person name="Glaser P."/>
            <person name="Goffeau A."/>
            <person name="Golightly E.J."/>
            <person name="Grandi G."/>
            <person name="Guiseppi G."/>
            <person name="Guy B.J."/>
            <person name="Haga K."/>
            <person name="Haiech J."/>
            <person name="Harwood C.R."/>
            <person name="Henaut A."/>
            <person name="Hilbert H."/>
            <person name="Holsappel S."/>
            <person name="Hosono S."/>
            <person name="Hullo M.-F."/>
            <person name="Itaya M."/>
            <person name="Jones L.-M."/>
            <person name="Joris B."/>
            <person name="Karamata D."/>
            <person name="Kasahara Y."/>
            <person name="Klaerr-Blanchard M."/>
            <person name="Klein C."/>
            <person name="Kobayashi Y."/>
            <person name="Koetter P."/>
            <person name="Koningstein G."/>
            <person name="Krogh S."/>
            <person name="Kumano M."/>
            <person name="Kurita K."/>
            <person name="Lapidus A."/>
            <person name="Lardinois S."/>
            <person name="Lauber J."/>
            <person name="Lazarevic V."/>
            <person name="Lee S.-M."/>
            <person name="Levine A."/>
            <person name="Liu H."/>
            <person name="Masuda S."/>
            <person name="Mauel C."/>
            <person name="Medigue C."/>
            <person name="Medina N."/>
            <person name="Mellado R.P."/>
            <person name="Mizuno M."/>
            <person name="Moestl D."/>
            <person name="Nakai S."/>
            <person name="Noback M."/>
            <person name="Noone D."/>
            <person name="O'Reilly M."/>
            <person name="Ogawa K."/>
            <person name="Ogiwara A."/>
            <person name="Oudega B."/>
            <person name="Park S.-H."/>
            <person name="Parro V."/>
            <person name="Pohl T.M."/>
            <person name="Portetelle D."/>
            <person name="Porwollik S."/>
            <person name="Prescott A.M."/>
            <person name="Presecan E."/>
            <person name="Pujic P."/>
            <person name="Purnelle B."/>
            <person name="Rapoport G."/>
            <person name="Rey M."/>
            <person name="Reynolds S."/>
            <person name="Rieger M."/>
            <person name="Rivolta C."/>
            <person name="Rocha E."/>
            <person name="Roche B."/>
            <person name="Rose M."/>
            <person name="Sadaie Y."/>
            <person name="Sato T."/>
            <person name="Scanlan E."/>
            <person name="Schleich S."/>
            <person name="Schroeter R."/>
            <person name="Scoffone F."/>
            <person name="Sekiguchi J."/>
            <person name="Sekowska A."/>
            <person name="Seror S.J."/>
            <person name="Serror P."/>
            <person name="Shin B.-S."/>
            <person name="Soldo B."/>
            <person name="Sorokin A."/>
            <person name="Tacconi E."/>
            <person name="Takagi T."/>
            <person name="Takahashi H."/>
            <person name="Takemaru K."/>
            <person name="Takeuchi M."/>
            <person name="Tamakoshi A."/>
            <person name="Tanaka T."/>
            <person name="Terpstra P."/>
            <person name="Tognoni A."/>
            <person name="Tosato V."/>
            <person name="Uchiyama S."/>
            <person name="Vandenbol M."/>
            <person name="Vannier F."/>
            <person name="Vassarotti A."/>
            <person name="Viari A."/>
            <person name="Wambutt R."/>
            <person name="Wedler E."/>
            <person name="Wedler H."/>
            <person name="Weitzenegger T."/>
            <person name="Winters P."/>
            <person name="Wipat A."/>
            <person name="Yamamoto H."/>
            <person name="Yamane K."/>
            <person name="Yasumoto K."/>
            <person name="Yata K."/>
            <person name="Yoshida K."/>
            <person name="Yoshikawa H.-F."/>
            <person name="Zumstein E."/>
            <person name="Yoshikawa H."/>
            <person name="Danchin A."/>
        </authorList>
    </citation>
    <scope>NUCLEOTIDE SEQUENCE [LARGE SCALE GENOMIC DNA]</scope>
    <source>
        <strain>168</strain>
    </source>
</reference>
<reference key="4">
    <citation type="journal article" date="1989" name="J. Gen. Microbiol.">
        <title>Cloning and sequencing of the gerD gene of Bacillus subtilis.</title>
        <authorList>
            <person name="Yon J.R."/>
            <person name="Sammons R.L."/>
            <person name="Smith D.A."/>
        </authorList>
    </citation>
    <scope>NUCLEOTIDE SEQUENCE [GENOMIC DNA] OF 328-352</scope>
    <source>
        <strain>168</strain>
    </source>
</reference>
<reference key="5">
    <citation type="journal article" date="2004" name="J. Bacteriol.">
        <title>Bacillus subtilis SalA (YbaL) negatively regulates expression of scoC, which encodes the repressor for the alkaline exoprotease gene, aprE.</title>
        <authorList>
            <person name="Ogura M."/>
            <person name="Matsuzawa A."/>
            <person name="Yoshikawa H."/>
            <person name="Tanaka T."/>
        </authorList>
    </citation>
    <scope>FUNCTION</scope>
</reference>
<reference key="6">
    <citation type="journal article" date="2021" name="Redox Biol.">
        <title>The Bacillus subtilis monothiol bacilliredoxin BrxC (YtxJ) and the Bdr (YpdA) disulfide reductase reduce S-bacillithiolated proteins.</title>
        <authorList>
            <person name="Gaballa A."/>
            <person name="Su T.T."/>
            <person name="Helmann J.D."/>
        </authorList>
    </citation>
    <scope>INTERACTION WITH BRXC</scope>
    <scope>IDENTIFICATION BY MASS SPECTROMETRY</scope>
    <source>
        <strain evidence="4">168 / CU1065</strain>
    </source>
</reference>
<protein>
    <recommendedName>
        <fullName evidence="1">Iron-sulfur cluster carrier protein</fullName>
    </recommendedName>
</protein>
<sequence length="352" mass="38639">MIREDEVRKLVGEMREPFLQRPLGELDAVKEIKIKPEKRHISVKVALAKTGTAEQMQIQQEIVNVLKGAGAETVGLRFEELPEETVAKFRAPSAEKKTLLNMDNPPVFLAVASGKGGVGKSTVSVNLAISLARLGKKVGLIDADIYGFSVPDMMGITVRPTIEGEKLLPVERFGVKVMSMGFFVEENAPVVWRGPMLGKMLNNFFHEVEWGEVDYIVLDLPPGTGDVALDVHTMLPSCKEIIVSTPHPTAAFVAARAGSMAIKTDHEVVGVIENMAYYESAKTGEREYVFGKGGGDKLAEELNVPLLGRIPLKQPDWDKDQFAPSVYDENHPIGEIYQDIAKKIDAKMSVQV</sequence>
<feature type="chain" id="PRO_0000184929" description="Iron-sulfur cluster carrier protein">
    <location>
        <begin position="1"/>
        <end position="352"/>
    </location>
</feature>
<feature type="binding site" evidence="1">
    <location>
        <begin position="114"/>
        <end position="121"/>
    </location>
    <ligand>
        <name>ATP</name>
        <dbReference type="ChEBI" id="CHEBI:30616"/>
    </ligand>
</feature>
<feature type="sequence conflict" description="In Ref. 4." evidence="5" ref="4">
    <original>D</original>
    <variation>Y</variation>
    <location>
        <position position="328"/>
    </location>
</feature>
<name>APBC_BACSU</name>
<gene>
    <name type="primary">salA</name>
    <name type="synonym">mrp</name>
    <name type="synonym">rec233</name>
    <name type="synonym">ybaL</name>
    <name type="synonym">ybxI</name>
    <name type="ordered locus">BSU01540</name>
</gene>
<proteinExistence type="evidence at protein level"/>
<evidence type="ECO:0000255" key="1">
    <source>
        <dbReference type="HAMAP-Rule" id="MF_02040"/>
    </source>
</evidence>
<evidence type="ECO:0000269" key="2">
    <source>
    </source>
</evidence>
<evidence type="ECO:0000269" key="3">
    <source>
    </source>
</evidence>
<evidence type="ECO:0000303" key="4">
    <source>
    </source>
</evidence>
<evidence type="ECO:0000305" key="5"/>
<accession>P50863</accession>
<organism>
    <name type="scientific">Bacillus subtilis (strain 168)</name>
    <dbReference type="NCBI Taxonomy" id="224308"/>
    <lineage>
        <taxon>Bacteria</taxon>
        <taxon>Bacillati</taxon>
        <taxon>Bacillota</taxon>
        <taxon>Bacilli</taxon>
        <taxon>Bacillales</taxon>
        <taxon>Bacillaceae</taxon>
        <taxon>Bacillus</taxon>
    </lineage>
</organism>
<keyword id="KW-0067">ATP-binding</keyword>
<keyword id="KW-0378">Hydrolase</keyword>
<keyword id="KW-0408">Iron</keyword>
<keyword id="KW-0411">Iron-sulfur</keyword>
<keyword id="KW-0479">Metal-binding</keyword>
<keyword id="KW-0547">Nucleotide-binding</keyword>
<keyword id="KW-1185">Reference proteome</keyword>